<reference key="1">
    <citation type="submission" date="2007-09" db="EMBL/GenBank/DDBJ databases">
        <title>Complete genome sequence of Rickettsia rickettsii.</title>
        <authorList>
            <person name="Madan A."/>
            <person name="Fahey J."/>
            <person name="Helton E."/>
            <person name="Ketteman M."/>
            <person name="Madan A."/>
            <person name="Rodrigues S."/>
            <person name="Sanchez A."/>
            <person name="Dasch G."/>
            <person name="Eremeeva M."/>
        </authorList>
    </citation>
    <scope>NUCLEOTIDE SEQUENCE [LARGE SCALE GENOMIC DNA]</scope>
    <source>
        <strain>Sheila Smith</strain>
    </source>
</reference>
<organism>
    <name type="scientific">Rickettsia rickettsii (strain Sheila Smith)</name>
    <dbReference type="NCBI Taxonomy" id="392021"/>
    <lineage>
        <taxon>Bacteria</taxon>
        <taxon>Pseudomonadati</taxon>
        <taxon>Pseudomonadota</taxon>
        <taxon>Alphaproteobacteria</taxon>
        <taxon>Rickettsiales</taxon>
        <taxon>Rickettsiaceae</taxon>
        <taxon>Rickettsieae</taxon>
        <taxon>Rickettsia</taxon>
        <taxon>spotted fever group</taxon>
    </lineage>
</organism>
<feature type="chain" id="PRO_1000070036" description="Tyrosine recombinase XerC">
    <location>
        <begin position="1"/>
        <end position="305"/>
    </location>
</feature>
<feature type="domain" description="Core-binding (CB)" evidence="3">
    <location>
        <begin position="4"/>
        <end position="95"/>
    </location>
</feature>
<feature type="domain" description="Tyr recombinase" evidence="2">
    <location>
        <begin position="116"/>
        <end position="298"/>
    </location>
</feature>
<feature type="active site" evidence="1">
    <location>
        <position position="159"/>
    </location>
</feature>
<feature type="active site" evidence="1">
    <location>
        <position position="182"/>
    </location>
</feature>
<feature type="active site" evidence="1">
    <location>
        <position position="250"/>
    </location>
</feature>
<feature type="active site" evidence="1">
    <location>
        <position position="253"/>
    </location>
</feature>
<feature type="active site" evidence="1">
    <location>
        <position position="276"/>
    </location>
</feature>
<feature type="active site" description="O-(3'-phospho-DNA)-tyrosine intermediate" evidence="1">
    <location>
        <position position="285"/>
    </location>
</feature>
<keyword id="KW-0131">Cell cycle</keyword>
<keyword id="KW-0132">Cell division</keyword>
<keyword id="KW-0159">Chromosome partition</keyword>
<keyword id="KW-0963">Cytoplasm</keyword>
<keyword id="KW-0229">DNA integration</keyword>
<keyword id="KW-0233">DNA recombination</keyword>
<keyword id="KW-0238">DNA-binding</keyword>
<protein>
    <recommendedName>
        <fullName evidence="1">Tyrosine recombinase XerC</fullName>
    </recommendedName>
</protein>
<sequence>MLDTSIQALINKWQKYLVLQRNYSNHTVISYNNDLKHFLEFMNYYNSELVTINHIKTADIRLIRSWLAKRNCDNFAASSISRGLSAVKNFYRFLEKTTQLNSHIIFSIKSPKKTKLLPKALSEDDVVISLEHIEEYGNIKWVELRNKALLVLIYASGLRISEALSITKLHLQNLEFIRIIGKGSKERIIPWLPIAKNLITQYLEILPYKLGDNEPIFRGKQGKKLQPPVFNRELIKLKHFYGLPQHLTAHSFRHSFASHLLEHGADLRSLQALLGHKSLSTTQNYTKTSIKHLEAVYTTAYPIKK</sequence>
<name>XERC_RICRS</name>
<evidence type="ECO:0000255" key="1">
    <source>
        <dbReference type="HAMAP-Rule" id="MF_01808"/>
    </source>
</evidence>
<evidence type="ECO:0000255" key="2">
    <source>
        <dbReference type="PROSITE-ProRule" id="PRU01246"/>
    </source>
</evidence>
<evidence type="ECO:0000255" key="3">
    <source>
        <dbReference type="PROSITE-ProRule" id="PRU01248"/>
    </source>
</evidence>
<dbReference type="EMBL" id="CP000848">
    <property type="protein sequence ID" value="ABV76833.1"/>
    <property type="molecule type" value="Genomic_DNA"/>
</dbReference>
<dbReference type="RefSeq" id="WP_012151373.1">
    <property type="nucleotide sequence ID" value="NZ_CP121767.1"/>
</dbReference>
<dbReference type="SMR" id="A8GTV8"/>
<dbReference type="GeneID" id="79937870"/>
<dbReference type="KEGG" id="rri:A1G_06960"/>
<dbReference type="HOGENOM" id="CLU_027562_9_0_5"/>
<dbReference type="Proteomes" id="UP000006832">
    <property type="component" value="Chromosome"/>
</dbReference>
<dbReference type="GO" id="GO:0005737">
    <property type="term" value="C:cytoplasm"/>
    <property type="evidence" value="ECO:0007669"/>
    <property type="project" value="UniProtKB-SubCell"/>
</dbReference>
<dbReference type="GO" id="GO:0003677">
    <property type="term" value="F:DNA binding"/>
    <property type="evidence" value="ECO:0007669"/>
    <property type="project" value="UniProtKB-KW"/>
</dbReference>
<dbReference type="GO" id="GO:0009037">
    <property type="term" value="F:tyrosine-based site-specific recombinase activity"/>
    <property type="evidence" value="ECO:0007669"/>
    <property type="project" value="UniProtKB-UniRule"/>
</dbReference>
<dbReference type="GO" id="GO:0051301">
    <property type="term" value="P:cell division"/>
    <property type="evidence" value="ECO:0007669"/>
    <property type="project" value="UniProtKB-KW"/>
</dbReference>
<dbReference type="GO" id="GO:0007059">
    <property type="term" value="P:chromosome segregation"/>
    <property type="evidence" value="ECO:0007669"/>
    <property type="project" value="UniProtKB-UniRule"/>
</dbReference>
<dbReference type="GO" id="GO:0006313">
    <property type="term" value="P:DNA transposition"/>
    <property type="evidence" value="ECO:0007669"/>
    <property type="project" value="UniProtKB-UniRule"/>
</dbReference>
<dbReference type="Gene3D" id="1.10.150.130">
    <property type="match status" value="1"/>
</dbReference>
<dbReference type="Gene3D" id="1.10.443.10">
    <property type="entry name" value="Intergrase catalytic core"/>
    <property type="match status" value="1"/>
</dbReference>
<dbReference type="HAMAP" id="MF_01808">
    <property type="entry name" value="Recomb_XerC_XerD"/>
    <property type="match status" value="1"/>
</dbReference>
<dbReference type="InterPro" id="IPR044068">
    <property type="entry name" value="CB"/>
</dbReference>
<dbReference type="InterPro" id="IPR011010">
    <property type="entry name" value="DNA_brk_join_enz"/>
</dbReference>
<dbReference type="InterPro" id="IPR013762">
    <property type="entry name" value="Integrase-like_cat_sf"/>
</dbReference>
<dbReference type="InterPro" id="IPR002104">
    <property type="entry name" value="Integrase_catalytic"/>
</dbReference>
<dbReference type="InterPro" id="IPR010998">
    <property type="entry name" value="Integrase_recombinase_N"/>
</dbReference>
<dbReference type="InterPro" id="IPR004107">
    <property type="entry name" value="Integrase_SAM-like_N"/>
</dbReference>
<dbReference type="InterPro" id="IPR023009">
    <property type="entry name" value="Tyrosine_recombinase_XerC/XerD"/>
</dbReference>
<dbReference type="InterPro" id="IPR050090">
    <property type="entry name" value="Tyrosine_recombinase_XerCD"/>
</dbReference>
<dbReference type="PANTHER" id="PTHR30349">
    <property type="entry name" value="PHAGE INTEGRASE-RELATED"/>
    <property type="match status" value="1"/>
</dbReference>
<dbReference type="PANTHER" id="PTHR30349:SF90">
    <property type="entry name" value="TYROSINE RECOMBINASE XERD"/>
    <property type="match status" value="1"/>
</dbReference>
<dbReference type="Pfam" id="PF02899">
    <property type="entry name" value="Phage_int_SAM_1"/>
    <property type="match status" value="1"/>
</dbReference>
<dbReference type="Pfam" id="PF00589">
    <property type="entry name" value="Phage_integrase"/>
    <property type="match status" value="1"/>
</dbReference>
<dbReference type="SUPFAM" id="SSF56349">
    <property type="entry name" value="DNA breaking-rejoining enzymes"/>
    <property type="match status" value="1"/>
</dbReference>
<dbReference type="PROSITE" id="PS51900">
    <property type="entry name" value="CB"/>
    <property type="match status" value="1"/>
</dbReference>
<dbReference type="PROSITE" id="PS51898">
    <property type="entry name" value="TYR_RECOMBINASE"/>
    <property type="match status" value="1"/>
</dbReference>
<accession>A8GTV8</accession>
<comment type="function">
    <text evidence="1">Site-specific tyrosine recombinase, which acts by catalyzing the cutting and rejoining of the recombining DNA molecules. The XerC-XerD complex is essential to convert dimers of the bacterial chromosome into monomers to permit their segregation at cell division. It also contributes to the segregational stability of plasmids.</text>
</comment>
<comment type="subunit">
    <text evidence="1">Forms a cyclic heterotetrameric complex composed of two molecules of XerC and two molecules of XerD.</text>
</comment>
<comment type="subcellular location">
    <subcellularLocation>
        <location evidence="1">Cytoplasm</location>
    </subcellularLocation>
</comment>
<comment type="similarity">
    <text evidence="1">Belongs to the 'phage' integrase family. XerC subfamily.</text>
</comment>
<proteinExistence type="inferred from homology"/>
<gene>
    <name evidence="1" type="primary">xerC</name>
    <name type="ordered locus">A1G_06960</name>
</gene>